<dbReference type="EC" id="1.4.1.21" evidence="1"/>
<dbReference type="EMBL" id="CU459141">
    <property type="protein sequence ID" value="CAM87666.1"/>
    <property type="molecule type" value="Genomic_DNA"/>
</dbReference>
<dbReference type="RefSeq" id="WP_000735778.1">
    <property type="nucleotide sequence ID" value="NZ_JBDGFB010000015.1"/>
</dbReference>
<dbReference type="SMR" id="B0V9I9"/>
<dbReference type="EnsemblBacteria" id="CAM87666">
    <property type="protein sequence ID" value="CAM87666"/>
    <property type="gene ID" value="ABAYE2838"/>
</dbReference>
<dbReference type="KEGG" id="aby:ABAYE2838"/>
<dbReference type="HOGENOM" id="CLU_089550_0_0_6"/>
<dbReference type="UniPathway" id="UPA00253">
    <property type="reaction ID" value="UER00456"/>
</dbReference>
<dbReference type="GO" id="GO:0033735">
    <property type="term" value="F:aspartate dehydrogenase activity"/>
    <property type="evidence" value="ECO:0007669"/>
    <property type="project" value="UniProtKB-EC"/>
</dbReference>
<dbReference type="GO" id="GO:0051287">
    <property type="term" value="F:NAD binding"/>
    <property type="evidence" value="ECO:0007669"/>
    <property type="project" value="UniProtKB-UniRule"/>
</dbReference>
<dbReference type="GO" id="GO:0050661">
    <property type="term" value="F:NADP binding"/>
    <property type="evidence" value="ECO:0007669"/>
    <property type="project" value="UniProtKB-UniRule"/>
</dbReference>
<dbReference type="GO" id="GO:0016639">
    <property type="term" value="F:oxidoreductase activity, acting on the CH-NH2 group of donors, NAD or NADP as acceptor"/>
    <property type="evidence" value="ECO:0007669"/>
    <property type="project" value="UniProtKB-UniRule"/>
</dbReference>
<dbReference type="GO" id="GO:0009435">
    <property type="term" value="P:NAD biosynthetic process"/>
    <property type="evidence" value="ECO:0007669"/>
    <property type="project" value="UniProtKB-UniRule"/>
</dbReference>
<dbReference type="Gene3D" id="3.30.360.10">
    <property type="entry name" value="Dihydrodipicolinate Reductase, domain 2"/>
    <property type="match status" value="1"/>
</dbReference>
<dbReference type="Gene3D" id="3.40.50.720">
    <property type="entry name" value="NAD(P)-binding Rossmann-like Domain"/>
    <property type="match status" value="1"/>
</dbReference>
<dbReference type="HAMAP" id="MF_01265">
    <property type="entry name" value="NadX"/>
    <property type="match status" value="1"/>
</dbReference>
<dbReference type="InterPro" id="IPR005106">
    <property type="entry name" value="Asp/hSer_DH_NAD-bd"/>
</dbReference>
<dbReference type="InterPro" id="IPR002811">
    <property type="entry name" value="Asp_DH"/>
</dbReference>
<dbReference type="InterPro" id="IPR020626">
    <property type="entry name" value="Asp_DH_prok"/>
</dbReference>
<dbReference type="InterPro" id="IPR011182">
    <property type="entry name" value="L-Asp_DH"/>
</dbReference>
<dbReference type="InterPro" id="IPR036291">
    <property type="entry name" value="NAD(P)-bd_dom_sf"/>
</dbReference>
<dbReference type="NCBIfam" id="NF009827">
    <property type="entry name" value="PRK13303.1-2"/>
    <property type="match status" value="1"/>
</dbReference>
<dbReference type="NCBIfam" id="NF009828">
    <property type="entry name" value="PRK13303.1-3"/>
    <property type="match status" value="1"/>
</dbReference>
<dbReference type="PANTHER" id="PTHR31873:SF6">
    <property type="entry name" value="ASPARTATE DEHYDROGENASE DOMAIN-CONTAINING PROTEIN"/>
    <property type="match status" value="1"/>
</dbReference>
<dbReference type="PANTHER" id="PTHR31873">
    <property type="entry name" value="L-ASPARTATE DEHYDROGENASE-RELATED"/>
    <property type="match status" value="1"/>
</dbReference>
<dbReference type="Pfam" id="PF01958">
    <property type="entry name" value="Asp_DH_C"/>
    <property type="match status" value="1"/>
</dbReference>
<dbReference type="Pfam" id="PF03447">
    <property type="entry name" value="NAD_binding_3"/>
    <property type="match status" value="1"/>
</dbReference>
<dbReference type="PIRSF" id="PIRSF005227">
    <property type="entry name" value="Asp_dh_NAD_syn"/>
    <property type="match status" value="1"/>
</dbReference>
<dbReference type="SUPFAM" id="SSF55347">
    <property type="entry name" value="Glyceraldehyde-3-phosphate dehydrogenase-like, C-terminal domain"/>
    <property type="match status" value="1"/>
</dbReference>
<dbReference type="SUPFAM" id="SSF51735">
    <property type="entry name" value="NAD(P)-binding Rossmann-fold domains"/>
    <property type="match status" value="1"/>
</dbReference>
<comment type="function">
    <text evidence="1">Specifically catalyzes the NAD or NADP-dependent dehydrogenation of L-aspartate to iminoaspartate.</text>
</comment>
<comment type="catalytic activity">
    <reaction evidence="1">
        <text>L-aspartate + NADP(+) + H2O = oxaloacetate + NH4(+) + NADPH + H(+)</text>
        <dbReference type="Rhea" id="RHEA:11784"/>
        <dbReference type="ChEBI" id="CHEBI:15377"/>
        <dbReference type="ChEBI" id="CHEBI:15378"/>
        <dbReference type="ChEBI" id="CHEBI:16452"/>
        <dbReference type="ChEBI" id="CHEBI:28938"/>
        <dbReference type="ChEBI" id="CHEBI:29991"/>
        <dbReference type="ChEBI" id="CHEBI:57783"/>
        <dbReference type="ChEBI" id="CHEBI:58349"/>
        <dbReference type="EC" id="1.4.1.21"/>
    </reaction>
</comment>
<comment type="catalytic activity">
    <reaction evidence="1">
        <text>L-aspartate + NAD(+) + H2O = oxaloacetate + NH4(+) + NADH + H(+)</text>
        <dbReference type="Rhea" id="RHEA:11788"/>
        <dbReference type="ChEBI" id="CHEBI:15377"/>
        <dbReference type="ChEBI" id="CHEBI:15378"/>
        <dbReference type="ChEBI" id="CHEBI:16452"/>
        <dbReference type="ChEBI" id="CHEBI:28938"/>
        <dbReference type="ChEBI" id="CHEBI:29991"/>
        <dbReference type="ChEBI" id="CHEBI:57540"/>
        <dbReference type="ChEBI" id="CHEBI:57945"/>
        <dbReference type="EC" id="1.4.1.21"/>
    </reaction>
</comment>
<comment type="pathway">
    <text evidence="1">Cofactor biosynthesis; NAD(+) biosynthesis; iminoaspartate from L-aspartate (dehydrogenase route): step 1/1.</text>
</comment>
<comment type="miscellaneous">
    <text evidence="1">The iminoaspartate product is unstable in aqueous solution and can decompose to oxaloacetate and ammonia.</text>
</comment>
<comment type="similarity">
    <text evidence="1">Belongs to the L-aspartate dehydrogenase family.</text>
</comment>
<protein>
    <recommendedName>
        <fullName evidence="1">L-aspartate dehydrogenase</fullName>
        <ecNumber evidence="1">1.4.1.21</ecNumber>
    </recommendedName>
</protein>
<sequence length="263" mass="27954">MKKLMMIGFGAMAAEVYAHLPQDLQLKWIVVPSRSIEKVQSQVSSDIQVISDIEQCDGTPDYVIEVAGQAAVKEHAQKVLAKGWTIGLISVGTLADSEFLVQLKQTAEKNDAHLHLLAGAIAGIDGISAAKEGGLQKVTYKGCKSPKSWKGSYAEQLVDLDHVSEPTVFFTGTAREAAMKFPANANVAATIALAGLGMDETMVELTVDPTINKNKHTIVAEGGFGQMTIELVGVPLPSNPKTSTLAALSVIRACRNSVEAIQI</sequence>
<gene>
    <name evidence="1" type="primary">nadX</name>
    <name type="ordered locus">ABAYE2838</name>
</gene>
<name>ASPD_ACIBY</name>
<organism>
    <name type="scientific">Acinetobacter baumannii (strain AYE)</name>
    <dbReference type="NCBI Taxonomy" id="509173"/>
    <lineage>
        <taxon>Bacteria</taxon>
        <taxon>Pseudomonadati</taxon>
        <taxon>Pseudomonadota</taxon>
        <taxon>Gammaproteobacteria</taxon>
        <taxon>Moraxellales</taxon>
        <taxon>Moraxellaceae</taxon>
        <taxon>Acinetobacter</taxon>
        <taxon>Acinetobacter calcoaceticus/baumannii complex</taxon>
    </lineage>
</organism>
<evidence type="ECO:0000255" key="1">
    <source>
        <dbReference type="HAMAP-Rule" id="MF_01265"/>
    </source>
</evidence>
<reference key="1">
    <citation type="journal article" date="2008" name="PLoS ONE">
        <title>Comparative analysis of Acinetobacters: three genomes for three lifestyles.</title>
        <authorList>
            <person name="Vallenet D."/>
            <person name="Nordmann P."/>
            <person name="Barbe V."/>
            <person name="Poirel L."/>
            <person name="Mangenot S."/>
            <person name="Bataille E."/>
            <person name="Dossat C."/>
            <person name="Gas S."/>
            <person name="Kreimeyer A."/>
            <person name="Lenoble P."/>
            <person name="Oztas S."/>
            <person name="Poulain J."/>
            <person name="Segurens B."/>
            <person name="Robert C."/>
            <person name="Abergel C."/>
            <person name="Claverie J.-M."/>
            <person name="Raoult D."/>
            <person name="Medigue C."/>
            <person name="Weissenbach J."/>
            <person name="Cruveiller S."/>
        </authorList>
    </citation>
    <scope>NUCLEOTIDE SEQUENCE [LARGE SCALE GENOMIC DNA]</scope>
    <source>
        <strain>AYE</strain>
    </source>
</reference>
<proteinExistence type="inferred from homology"/>
<accession>B0V9I9</accession>
<keyword id="KW-0520">NAD</keyword>
<keyword id="KW-0521">NADP</keyword>
<keyword id="KW-0560">Oxidoreductase</keyword>
<keyword id="KW-0662">Pyridine nucleotide biosynthesis</keyword>
<feature type="chain" id="PRO_1000140085" description="L-aspartate dehydrogenase">
    <location>
        <begin position="1"/>
        <end position="263"/>
    </location>
</feature>
<feature type="active site" evidence="1">
    <location>
        <position position="216"/>
    </location>
</feature>
<feature type="binding site" evidence="1">
    <location>
        <position position="120"/>
    </location>
    <ligand>
        <name>NAD(+)</name>
        <dbReference type="ChEBI" id="CHEBI:57540"/>
    </ligand>
</feature>
<feature type="binding site" evidence="1">
    <location>
        <position position="186"/>
    </location>
    <ligand>
        <name>NAD(+)</name>
        <dbReference type="ChEBI" id="CHEBI:57540"/>
    </ligand>
</feature>